<feature type="chain" id="PRO_0000164364" description="Neuronal vesicle trafficking-associated protein 1">
    <location>
        <begin position="1"/>
        <end position="185"/>
    </location>
</feature>
<feature type="topological domain" description="Cytoplasmic" evidence="1">
    <location>
        <begin position="1"/>
        <end position="82"/>
    </location>
</feature>
<feature type="transmembrane region" description="Helical; Signal-anchor for type II membrane protein" evidence="3">
    <location>
        <begin position="83"/>
        <end position="103"/>
    </location>
</feature>
<feature type="topological domain" description="Lumenal" evidence="1">
    <location>
        <begin position="104"/>
        <end position="185"/>
    </location>
</feature>
<feature type="region of interest" description="Required for GRIP1 interaction" evidence="1">
    <location>
        <begin position="129"/>
        <end position="164"/>
    </location>
</feature>
<feature type="sequence conflict" description="In Ref. 1; AAA39966." evidence="12" ref="1">
    <original>C</original>
    <variation>Y</variation>
    <location>
        <position position="112"/>
    </location>
</feature>
<feature type="sequence conflict" description="In Ref. 1; AAA39966." evidence="12" ref="1">
    <original>A</original>
    <variation>D</variation>
    <location>
        <position position="139"/>
    </location>
</feature>
<feature type="sequence conflict" description="In Ref. 1; AAA39966." evidence="12" ref="1">
    <original>NV</original>
    <variation>KL</variation>
    <location>
        <begin position="151"/>
        <end position="152"/>
    </location>
</feature>
<reference key="1">
    <citation type="journal article" date="1996" name="Brain Res. Mol. Brain Res.">
        <title>Variable subcellular localization of a neuron-specific protein during NTera 2 differentiation into post-mitotic human neurons.</title>
        <authorList>
            <person name="Carlock L."/>
            <person name="Vo T."/>
            <person name="Lorincz M."/>
            <person name="Walker P.D."/>
            <person name="Bessert D."/>
            <person name="Wisniewski D."/>
            <person name="Dunbar J.C."/>
        </authorList>
    </citation>
    <scope>NUCLEOTIDE SEQUENCE [GENOMIC DNA]</scope>
</reference>
<reference key="2">
    <citation type="journal article" date="1998" name="J. Biol. Chem.">
        <title>A 21-kDa polypeptide belonging to a new family of proteins is expressed in the Golgi apparatus of neural and germ cells.</title>
        <authorList>
            <person name="Saberan-Djoneidi D."/>
            <person name="Picart R."/>
            <person name="Escalier D."/>
            <person name="Gelman M."/>
            <person name="Barret A."/>
            <person name="Tougard C."/>
            <person name="Glowinski J."/>
            <person name="Levi-Strauss M."/>
        </authorList>
    </citation>
    <scope>NUCLEOTIDE SEQUENCE [MRNA]</scope>
    <source>
        <strain>BALB/cJ</strain>
        <tissue>Brain</tissue>
    </source>
</reference>
<reference key="3">
    <citation type="journal article" date="2005" name="Science">
        <title>The transcriptional landscape of the mammalian genome.</title>
        <authorList>
            <person name="Carninci P."/>
            <person name="Kasukawa T."/>
            <person name="Katayama S."/>
            <person name="Gough J."/>
            <person name="Frith M.C."/>
            <person name="Maeda N."/>
            <person name="Oyama R."/>
            <person name="Ravasi T."/>
            <person name="Lenhard B."/>
            <person name="Wells C."/>
            <person name="Kodzius R."/>
            <person name="Shimokawa K."/>
            <person name="Bajic V.B."/>
            <person name="Brenner S.E."/>
            <person name="Batalov S."/>
            <person name="Forrest A.R."/>
            <person name="Zavolan M."/>
            <person name="Davis M.J."/>
            <person name="Wilming L.G."/>
            <person name="Aidinis V."/>
            <person name="Allen J.E."/>
            <person name="Ambesi-Impiombato A."/>
            <person name="Apweiler R."/>
            <person name="Aturaliya R.N."/>
            <person name="Bailey T.L."/>
            <person name="Bansal M."/>
            <person name="Baxter L."/>
            <person name="Beisel K.W."/>
            <person name="Bersano T."/>
            <person name="Bono H."/>
            <person name="Chalk A.M."/>
            <person name="Chiu K.P."/>
            <person name="Choudhary V."/>
            <person name="Christoffels A."/>
            <person name="Clutterbuck D.R."/>
            <person name="Crowe M.L."/>
            <person name="Dalla E."/>
            <person name="Dalrymple B.P."/>
            <person name="de Bono B."/>
            <person name="Della Gatta G."/>
            <person name="di Bernardo D."/>
            <person name="Down T."/>
            <person name="Engstrom P."/>
            <person name="Fagiolini M."/>
            <person name="Faulkner G."/>
            <person name="Fletcher C.F."/>
            <person name="Fukushima T."/>
            <person name="Furuno M."/>
            <person name="Futaki S."/>
            <person name="Gariboldi M."/>
            <person name="Georgii-Hemming P."/>
            <person name="Gingeras T.R."/>
            <person name="Gojobori T."/>
            <person name="Green R.E."/>
            <person name="Gustincich S."/>
            <person name="Harbers M."/>
            <person name="Hayashi Y."/>
            <person name="Hensch T.K."/>
            <person name="Hirokawa N."/>
            <person name="Hill D."/>
            <person name="Huminiecki L."/>
            <person name="Iacono M."/>
            <person name="Ikeo K."/>
            <person name="Iwama A."/>
            <person name="Ishikawa T."/>
            <person name="Jakt M."/>
            <person name="Kanapin A."/>
            <person name="Katoh M."/>
            <person name="Kawasawa Y."/>
            <person name="Kelso J."/>
            <person name="Kitamura H."/>
            <person name="Kitano H."/>
            <person name="Kollias G."/>
            <person name="Krishnan S.P."/>
            <person name="Kruger A."/>
            <person name="Kummerfeld S.K."/>
            <person name="Kurochkin I.V."/>
            <person name="Lareau L.F."/>
            <person name="Lazarevic D."/>
            <person name="Lipovich L."/>
            <person name="Liu J."/>
            <person name="Liuni S."/>
            <person name="McWilliam S."/>
            <person name="Madan Babu M."/>
            <person name="Madera M."/>
            <person name="Marchionni L."/>
            <person name="Matsuda H."/>
            <person name="Matsuzawa S."/>
            <person name="Miki H."/>
            <person name="Mignone F."/>
            <person name="Miyake S."/>
            <person name="Morris K."/>
            <person name="Mottagui-Tabar S."/>
            <person name="Mulder N."/>
            <person name="Nakano N."/>
            <person name="Nakauchi H."/>
            <person name="Ng P."/>
            <person name="Nilsson R."/>
            <person name="Nishiguchi S."/>
            <person name="Nishikawa S."/>
            <person name="Nori F."/>
            <person name="Ohara O."/>
            <person name="Okazaki Y."/>
            <person name="Orlando V."/>
            <person name="Pang K.C."/>
            <person name="Pavan W.J."/>
            <person name="Pavesi G."/>
            <person name="Pesole G."/>
            <person name="Petrovsky N."/>
            <person name="Piazza S."/>
            <person name="Reed J."/>
            <person name="Reid J.F."/>
            <person name="Ring B.Z."/>
            <person name="Ringwald M."/>
            <person name="Rost B."/>
            <person name="Ruan Y."/>
            <person name="Salzberg S.L."/>
            <person name="Sandelin A."/>
            <person name="Schneider C."/>
            <person name="Schoenbach C."/>
            <person name="Sekiguchi K."/>
            <person name="Semple C.A."/>
            <person name="Seno S."/>
            <person name="Sessa L."/>
            <person name="Sheng Y."/>
            <person name="Shibata Y."/>
            <person name="Shimada H."/>
            <person name="Shimada K."/>
            <person name="Silva D."/>
            <person name="Sinclair B."/>
            <person name="Sperling S."/>
            <person name="Stupka E."/>
            <person name="Sugiura K."/>
            <person name="Sultana R."/>
            <person name="Takenaka Y."/>
            <person name="Taki K."/>
            <person name="Tammoja K."/>
            <person name="Tan S.L."/>
            <person name="Tang S."/>
            <person name="Taylor M.S."/>
            <person name="Tegner J."/>
            <person name="Teichmann S.A."/>
            <person name="Ueda H.R."/>
            <person name="van Nimwegen E."/>
            <person name="Verardo R."/>
            <person name="Wei C.L."/>
            <person name="Yagi K."/>
            <person name="Yamanishi H."/>
            <person name="Zabarovsky E."/>
            <person name="Zhu S."/>
            <person name="Zimmer A."/>
            <person name="Hide W."/>
            <person name="Bult C."/>
            <person name="Grimmond S.M."/>
            <person name="Teasdale R.D."/>
            <person name="Liu E.T."/>
            <person name="Brusic V."/>
            <person name="Quackenbush J."/>
            <person name="Wahlestedt C."/>
            <person name="Mattick J.S."/>
            <person name="Hume D.A."/>
            <person name="Kai C."/>
            <person name="Sasaki D."/>
            <person name="Tomaru Y."/>
            <person name="Fukuda S."/>
            <person name="Kanamori-Katayama M."/>
            <person name="Suzuki M."/>
            <person name="Aoki J."/>
            <person name="Arakawa T."/>
            <person name="Iida J."/>
            <person name="Imamura K."/>
            <person name="Itoh M."/>
            <person name="Kato T."/>
            <person name="Kawaji H."/>
            <person name="Kawagashira N."/>
            <person name="Kawashima T."/>
            <person name="Kojima M."/>
            <person name="Kondo S."/>
            <person name="Konno H."/>
            <person name="Nakano K."/>
            <person name="Ninomiya N."/>
            <person name="Nishio T."/>
            <person name="Okada M."/>
            <person name="Plessy C."/>
            <person name="Shibata K."/>
            <person name="Shiraki T."/>
            <person name="Suzuki S."/>
            <person name="Tagami M."/>
            <person name="Waki K."/>
            <person name="Watahiki A."/>
            <person name="Okamura-Oho Y."/>
            <person name="Suzuki H."/>
            <person name="Kawai J."/>
            <person name="Hayashizaki Y."/>
        </authorList>
    </citation>
    <scope>NUCLEOTIDE SEQUENCE [LARGE SCALE MRNA]</scope>
    <source>
        <strain>C57BL/6J</strain>
        <tissue>Brain cortex</tissue>
        <tissue>Head</tissue>
        <tissue>Sympathetic ganglion</tissue>
    </source>
</reference>
<reference key="4">
    <citation type="journal article" date="2004" name="Genome Res.">
        <title>The status, quality, and expansion of the NIH full-length cDNA project: the Mammalian Gene Collection (MGC).</title>
        <authorList>
            <consortium name="The MGC Project Team"/>
        </authorList>
    </citation>
    <scope>NUCLEOTIDE SEQUENCE [LARGE SCALE MRNA]</scope>
</reference>
<reference key="5">
    <citation type="journal article" date="2002" name="J. Cell Biol.">
        <title>Modulation of receptor cycling by neuron-enriched endosomal protein of 21 kD.</title>
        <authorList>
            <person name="Steiner P."/>
            <person name="Sarria J.C."/>
            <person name="Glauser L."/>
            <person name="Magnin S."/>
            <person name="Catsicas S."/>
            <person name="Hirling H."/>
        </authorList>
    </citation>
    <scope>INTERACTION WITH STX12</scope>
    <scope>FUNCTION</scope>
    <scope>SUBCELLULAR LOCATION</scope>
</reference>
<reference key="6">
    <citation type="journal article" date="2004" name="J. Biol. Chem.">
        <title>Crucial role of neuron-enriched endosomal protein of 21 kDa in sorting between degradation and recycling of internalized G-protein-coupled receptors.</title>
        <authorList>
            <person name="Debaigt C."/>
            <person name="Hirling H."/>
            <person name="Steiner P."/>
            <person name="Vincent J.P."/>
            <person name="Mazella J."/>
        </authorList>
    </citation>
    <scope>FUNCTION</scope>
</reference>
<reference key="7">
    <citation type="journal article" date="2005" name="EMBO J.">
        <title>Interactions between NEEP21, GRIP1 and GluR2 regulate sorting and recycling of the glutamate receptor subunit GluR2.</title>
        <authorList>
            <person name="Steiner P."/>
            <person name="Alberi S."/>
            <person name="Kulangara K."/>
            <person name="Yersin A."/>
            <person name="Sarria J.C."/>
            <person name="Regulier E."/>
            <person name="Kasas S."/>
            <person name="Dietler G."/>
            <person name="Muller D."/>
            <person name="Catsicas S."/>
            <person name="Hirling H."/>
        </authorList>
    </citation>
    <scope>FUNCTION</scope>
</reference>
<reference key="8">
    <citation type="journal article" date="2010" name="Cell">
        <title>A tissue-specific atlas of mouse protein phosphorylation and expression.</title>
        <authorList>
            <person name="Huttlin E.L."/>
            <person name="Jedrychowski M.P."/>
            <person name="Elias J.E."/>
            <person name="Goswami T."/>
            <person name="Rad R."/>
            <person name="Beausoleil S.A."/>
            <person name="Villen J."/>
            <person name="Haas W."/>
            <person name="Sowa M.E."/>
            <person name="Gygi S.P."/>
        </authorList>
    </citation>
    <scope>IDENTIFICATION BY MASS SPECTROMETRY [LARGE SCALE ANALYSIS]</scope>
    <source>
        <tissue>Brain</tissue>
    </source>
</reference>
<reference key="9">
    <citation type="journal article" date="2010" name="J. Neurosci.">
        <title>Identification of NEEP21 as a ss-amyloid precursor protein-interacting protein in vivo that modulates amyloidogenic processing in vitro.</title>
        <authorList>
            <person name="Norstrom E.M."/>
            <person name="Zhang C."/>
            <person name="Tanzi R."/>
            <person name="Sisodia S.S."/>
        </authorList>
    </citation>
    <scope>INTERACTION WITH APP</scope>
    <scope>FUNCTION</scope>
</reference>
<reference key="10">
    <citation type="journal article" date="2017" name="J. Comp. Neurol.">
        <title>The related neuronal endosomal proteins NEEP21 (Nsg1) and P19 (Nsg2) have divergent expression profiles in vivo.</title>
        <authorList>
            <person name="Barford K."/>
            <person name="Yap C.C."/>
            <person name="Dwyer N.D."/>
            <person name="Winckler B."/>
        </authorList>
    </citation>
    <scope>TISSUE SPECIFICITY</scope>
    <scope>DEVELOPMENTAL STAGE</scope>
</reference>
<reference key="11">
    <citation type="journal article" date="2017" name="Sci. Rep.">
        <title>The endosomal neuronal proteins Nsg1/NEEP21 and Nsg2/P19 are itinerant, not resident proteins of dendritic endosomes.</title>
        <authorList>
            <person name="Yap C.C."/>
            <person name="Digilio L."/>
            <person name="McMahon L."/>
            <person name="Winckler B."/>
        </authorList>
    </citation>
    <scope>SUBCELLULAR LOCATION</scope>
</reference>
<evidence type="ECO:0000250" key="1">
    <source>
        <dbReference type="UniProtKB" id="P02683"/>
    </source>
</evidence>
<evidence type="ECO:0000250" key="2">
    <source>
        <dbReference type="UniProtKB" id="P42857"/>
    </source>
</evidence>
<evidence type="ECO:0000255" key="3"/>
<evidence type="ECO:0000269" key="4">
    <source>
    </source>
</evidence>
<evidence type="ECO:0000269" key="5">
    <source>
    </source>
</evidence>
<evidence type="ECO:0000269" key="6">
    <source>
    </source>
</evidence>
<evidence type="ECO:0000269" key="7">
    <source>
    </source>
</evidence>
<evidence type="ECO:0000269" key="8">
    <source>
    </source>
</evidence>
<evidence type="ECO:0000269" key="9">
    <source>
    </source>
</evidence>
<evidence type="ECO:0000303" key="10">
    <source>
    </source>
</evidence>
<evidence type="ECO:0000303" key="11">
    <source>
    </source>
</evidence>
<evidence type="ECO:0000305" key="12"/>
<evidence type="ECO:0000312" key="13">
    <source>
        <dbReference type="MGI" id="MGI:109149"/>
    </source>
</evidence>
<accession>Q62092</accession>
<accession>O54717</accession>
<accession>Q3UF63</accession>
<accession>Q922E5</accession>
<proteinExistence type="evidence at protein level"/>
<name>NSG1_MOUSE</name>
<sequence>MVKLGNNFAEKGTKQPLLEDGFDTIPLMTPLDVNQLQFPPPDKVVVKTKTEYEPDRKKGKARPPKIAEFTVSITEGVTERFKVSVLVLFALAFLTCVVFLVVYKVYKYDRACPDGFVLKNTQCIPEGLESYYTEQDSSAREKFYTVINHYNVAKQSITRSVSPWMSVLSEEKLSEQETEAAEKSA</sequence>
<keyword id="KW-0966">Cell projection</keyword>
<keyword id="KW-0968">Cytoplasmic vesicle</keyword>
<keyword id="KW-0256">Endoplasmic reticulum</keyword>
<keyword id="KW-0967">Endosome</keyword>
<keyword id="KW-0333">Golgi apparatus</keyword>
<keyword id="KW-0458">Lysosome</keyword>
<keyword id="KW-0472">Membrane</keyword>
<keyword id="KW-1185">Reference proteome</keyword>
<keyword id="KW-0735">Signal-anchor</keyword>
<keyword id="KW-0812">Transmembrane</keyword>
<keyword id="KW-1133">Transmembrane helix</keyword>
<protein>
    <recommendedName>
        <fullName evidence="2">Neuronal vesicle trafficking-associated protein 1</fullName>
    </recommendedName>
    <alternativeName>
        <fullName>M234</fullName>
    </alternativeName>
    <alternativeName>
        <fullName evidence="10">Neuron-enriched endosomal protein of 21 kDa</fullName>
    </alternativeName>
    <alternativeName>
        <fullName evidence="2">Neuron-specific protein family member 1</fullName>
    </alternativeName>
    <alternativeName>
        <fullName evidence="11">p21</fullName>
    </alternativeName>
</protein>
<gene>
    <name evidence="13" type="primary">Nsg1</name>
    <name evidence="10" type="synonym">NEEP21</name>
</gene>
<dbReference type="EMBL" id="M98530">
    <property type="protein sequence ID" value="AAA39966.1"/>
    <property type="molecule type" value="Genomic_DNA"/>
</dbReference>
<dbReference type="EMBL" id="AF035683">
    <property type="protein sequence ID" value="AAB88210.1"/>
    <property type="molecule type" value="mRNA"/>
</dbReference>
<dbReference type="EMBL" id="AK076451">
    <property type="protein sequence ID" value="BAC36347.1"/>
    <property type="molecule type" value="mRNA"/>
</dbReference>
<dbReference type="EMBL" id="AK144503">
    <property type="protein sequence ID" value="BAE25919.1"/>
    <property type="molecule type" value="mRNA"/>
</dbReference>
<dbReference type="EMBL" id="AK148941">
    <property type="protein sequence ID" value="BAE28698.1"/>
    <property type="molecule type" value="mRNA"/>
</dbReference>
<dbReference type="EMBL" id="BC008272">
    <property type="protein sequence ID" value="AAH08272.1"/>
    <property type="molecule type" value="mRNA"/>
</dbReference>
<dbReference type="CCDS" id="CCDS19251.1"/>
<dbReference type="RefSeq" id="NP_001346019.1">
    <property type="nucleotide sequence ID" value="NM_001359090.1"/>
</dbReference>
<dbReference type="RefSeq" id="NP_001346020.1">
    <property type="nucleotide sequence ID" value="NM_001359091.1"/>
</dbReference>
<dbReference type="RefSeq" id="NP_001346021.1">
    <property type="nucleotide sequence ID" value="NM_001359092.1"/>
</dbReference>
<dbReference type="RefSeq" id="NP_035072.2">
    <property type="nucleotide sequence ID" value="NM_010942.3"/>
</dbReference>
<dbReference type="RefSeq" id="XP_006503836.1">
    <property type="nucleotide sequence ID" value="XM_006503773.1"/>
</dbReference>
<dbReference type="SMR" id="Q62092"/>
<dbReference type="FunCoup" id="Q62092">
    <property type="interactions" value="517"/>
</dbReference>
<dbReference type="STRING" id="10090.ENSMUSP00000031009"/>
<dbReference type="iPTMnet" id="Q62092"/>
<dbReference type="PhosphoSitePlus" id="Q62092"/>
<dbReference type="PaxDb" id="10090-ENSMUSP00000031009"/>
<dbReference type="PeptideAtlas" id="Q62092"/>
<dbReference type="ProteomicsDB" id="293984"/>
<dbReference type="Pumba" id="Q62092"/>
<dbReference type="Antibodypedia" id="22570">
    <property type="antibodies" value="223 antibodies from 29 providers"/>
</dbReference>
<dbReference type="DNASU" id="18196"/>
<dbReference type="Ensembl" id="ENSMUST00000031009.8">
    <property type="protein sequence ID" value="ENSMUSP00000031009.5"/>
    <property type="gene ID" value="ENSMUSG00000029126.8"/>
</dbReference>
<dbReference type="Ensembl" id="ENSMUST00000201363.4">
    <property type="protein sequence ID" value="ENSMUSP00000144396.2"/>
    <property type="gene ID" value="ENSMUSG00000029126.8"/>
</dbReference>
<dbReference type="GeneID" id="18196"/>
<dbReference type="KEGG" id="mmu:18196"/>
<dbReference type="UCSC" id="uc008xga.1">
    <property type="organism name" value="mouse"/>
</dbReference>
<dbReference type="AGR" id="MGI:109149"/>
<dbReference type="CTD" id="27065"/>
<dbReference type="MGI" id="MGI:109149">
    <property type="gene designation" value="Nsg1"/>
</dbReference>
<dbReference type="VEuPathDB" id="HostDB:ENSMUSG00000029126"/>
<dbReference type="eggNOG" id="ENOG502QSAI">
    <property type="taxonomic scope" value="Eukaryota"/>
</dbReference>
<dbReference type="GeneTree" id="ENSGT00390000000483"/>
<dbReference type="HOGENOM" id="CLU_112085_1_0_1"/>
<dbReference type="InParanoid" id="Q62092"/>
<dbReference type="OMA" id="MQGRCMP"/>
<dbReference type="OrthoDB" id="8924576at2759"/>
<dbReference type="PhylomeDB" id="Q62092"/>
<dbReference type="TreeFam" id="TF332232"/>
<dbReference type="BioGRID-ORCS" id="18196">
    <property type="hits" value="0 hits in 77 CRISPR screens"/>
</dbReference>
<dbReference type="ChiTaRS" id="Nsg1">
    <property type="organism name" value="mouse"/>
</dbReference>
<dbReference type="PRO" id="PR:Q62092"/>
<dbReference type="Proteomes" id="UP000000589">
    <property type="component" value="Chromosome 5"/>
</dbReference>
<dbReference type="RNAct" id="Q62092">
    <property type="molecule type" value="protein"/>
</dbReference>
<dbReference type="Bgee" id="ENSMUSG00000029126">
    <property type="expression patterns" value="Expressed in cortical plate and 232 other cell types or tissues"/>
</dbReference>
<dbReference type="ExpressionAtlas" id="Q62092">
    <property type="expression patterns" value="baseline and differential"/>
</dbReference>
<dbReference type="GO" id="GO:0030425">
    <property type="term" value="C:dendrite"/>
    <property type="evidence" value="ECO:0000250"/>
    <property type="project" value="UniProtKB"/>
</dbReference>
<dbReference type="GO" id="GO:0031901">
    <property type="term" value="C:early endosome membrane"/>
    <property type="evidence" value="ECO:0000250"/>
    <property type="project" value="UniProtKB"/>
</dbReference>
<dbReference type="GO" id="GO:0005783">
    <property type="term" value="C:endoplasmic reticulum"/>
    <property type="evidence" value="ECO:0000250"/>
    <property type="project" value="UniProtKB"/>
</dbReference>
<dbReference type="GO" id="GO:0005789">
    <property type="term" value="C:endoplasmic reticulum membrane"/>
    <property type="evidence" value="ECO:0007669"/>
    <property type="project" value="UniProtKB-SubCell"/>
</dbReference>
<dbReference type="GO" id="GO:0005768">
    <property type="term" value="C:endosome"/>
    <property type="evidence" value="ECO:0000314"/>
    <property type="project" value="MGI"/>
</dbReference>
<dbReference type="GO" id="GO:0098978">
    <property type="term" value="C:glutamatergic synapse"/>
    <property type="evidence" value="ECO:0000314"/>
    <property type="project" value="SynGO"/>
</dbReference>
<dbReference type="GO" id="GO:0032580">
    <property type="term" value="C:Golgi cisterna membrane"/>
    <property type="evidence" value="ECO:0007669"/>
    <property type="project" value="UniProtKB-SubCell"/>
</dbReference>
<dbReference type="GO" id="GO:0005770">
    <property type="term" value="C:late endosome"/>
    <property type="evidence" value="ECO:0000314"/>
    <property type="project" value="UniProtKB"/>
</dbReference>
<dbReference type="GO" id="GO:0016328">
    <property type="term" value="C:lateral plasma membrane"/>
    <property type="evidence" value="ECO:0000314"/>
    <property type="project" value="MGI"/>
</dbReference>
<dbReference type="GO" id="GO:0043202">
    <property type="term" value="C:lysosomal lumen"/>
    <property type="evidence" value="ECO:0007669"/>
    <property type="project" value="UniProtKB-SubCell"/>
</dbReference>
<dbReference type="GO" id="GO:0032585">
    <property type="term" value="C:multivesicular body membrane"/>
    <property type="evidence" value="ECO:0007669"/>
    <property type="project" value="UniProtKB-SubCell"/>
</dbReference>
<dbReference type="GO" id="GO:0098845">
    <property type="term" value="C:postsynaptic endosome"/>
    <property type="evidence" value="ECO:0007669"/>
    <property type="project" value="Ensembl"/>
</dbReference>
<dbReference type="GO" id="GO:0045211">
    <property type="term" value="C:postsynaptic membrane"/>
    <property type="evidence" value="ECO:0000314"/>
    <property type="project" value="MGI"/>
</dbReference>
<dbReference type="GO" id="GO:0055038">
    <property type="term" value="C:recycling endosome membrane"/>
    <property type="evidence" value="ECO:0000250"/>
    <property type="project" value="UniProtKB"/>
</dbReference>
<dbReference type="GO" id="GO:0036477">
    <property type="term" value="C:somatodendritic compartment"/>
    <property type="evidence" value="ECO:0000250"/>
    <property type="project" value="UniProtKB"/>
</dbReference>
<dbReference type="GO" id="GO:0032588">
    <property type="term" value="C:trans-Golgi network membrane"/>
    <property type="evidence" value="ECO:0000250"/>
    <property type="project" value="UniProtKB"/>
</dbReference>
<dbReference type="GO" id="GO:0032051">
    <property type="term" value="F:clathrin light chain binding"/>
    <property type="evidence" value="ECO:0007669"/>
    <property type="project" value="InterPro"/>
</dbReference>
<dbReference type="GO" id="GO:0035255">
    <property type="term" value="F:ionotropic glutamate receptor binding"/>
    <property type="evidence" value="ECO:0007669"/>
    <property type="project" value="Ensembl"/>
</dbReference>
<dbReference type="GO" id="GO:0042982">
    <property type="term" value="P:amyloid precursor protein metabolic process"/>
    <property type="evidence" value="ECO:0000314"/>
    <property type="project" value="UniProtKB"/>
</dbReference>
<dbReference type="GO" id="GO:0006915">
    <property type="term" value="P:apoptotic process"/>
    <property type="evidence" value="ECO:0000250"/>
    <property type="project" value="UniProtKB"/>
</dbReference>
<dbReference type="GO" id="GO:0048268">
    <property type="term" value="P:clathrin coat assembly"/>
    <property type="evidence" value="ECO:0007669"/>
    <property type="project" value="InterPro"/>
</dbReference>
<dbReference type="GO" id="GO:0099627">
    <property type="term" value="P:neurotransmitter receptor cycle"/>
    <property type="evidence" value="ECO:0000314"/>
    <property type="project" value="UniProtKB"/>
</dbReference>
<dbReference type="GO" id="GO:0098887">
    <property type="term" value="P:neurotransmitter receptor transport, endosome to postsynaptic membrane"/>
    <property type="evidence" value="ECO:0000314"/>
    <property type="project" value="SynGO"/>
</dbReference>
<dbReference type="GO" id="GO:0001921">
    <property type="term" value="P:positive regulation of receptor recycling"/>
    <property type="evidence" value="ECO:0007669"/>
    <property type="project" value="Ensembl"/>
</dbReference>
<dbReference type="GO" id="GO:0099630">
    <property type="term" value="P:postsynaptic neurotransmitter receptor cycle"/>
    <property type="evidence" value="ECO:0000250"/>
    <property type="project" value="UniProtKB"/>
</dbReference>
<dbReference type="GO" id="GO:0001881">
    <property type="term" value="P:receptor recycling"/>
    <property type="evidence" value="ECO:0000315"/>
    <property type="project" value="UniProtKB"/>
</dbReference>
<dbReference type="GO" id="GO:1900271">
    <property type="term" value="P:regulation of long-term synaptic potentiation"/>
    <property type="evidence" value="ECO:0000250"/>
    <property type="project" value="UniProtKB"/>
</dbReference>
<dbReference type="GO" id="GO:0098814">
    <property type="term" value="P:spontaneous synaptic transmission"/>
    <property type="evidence" value="ECO:0000250"/>
    <property type="project" value="UniProtKB"/>
</dbReference>
<dbReference type="GO" id="GO:0099003">
    <property type="term" value="P:vesicle-mediated transport in synapse"/>
    <property type="evidence" value="ECO:0000314"/>
    <property type="project" value="SynGO"/>
</dbReference>
<dbReference type="InterPro" id="IPR009431">
    <property type="entry name" value="NSG"/>
</dbReference>
<dbReference type="PANTHER" id="PTHR28546:SF3">
    <property type="entry name" value="NEURONAL VESICLE TRAFFICKING-ASSOCIATED PROTEIN 1"/>
    <property type="match status" value="1"/>
</dbReference>
<dbReference type="PANTHER" id="PTHR28546">
    <property type="entry name" value="NEURONAL VESICLE TRAFFICKING-ASSOCIATED PROTEIN 2-RELATED"/>
    <property type="match status" value="1"/>
</dbReference>
<dbReference type="Pfam" id="PF06387">
    <property type="entry name" value="Calcyon"/>
    <property type="match status" value="1"/>
</dbReference>
<dbReference type="PIRSF" id="PIRSF002383">
    <property type="entry name" value="Calcyon"/>
    <property type="match status" value="1"/>
</dbReference>
<comment type="function">
    <text evidence="1 2 4 5 6 7">Plays a role in the recycling mechanism in neurons of multiple receptors, including AMPAR, APP and L1CAM and acts at the level of early endosomes to promote sorting of receptors toward a recycling pathway (PubMed:12070131, PubMed:15187090, PubMed:16037816, PubMed:21084623). Regulates sorting and recycling of GRIA2 through interaction with GRIP1 and then contributes to the regulation of synaptic transmission and plasticity by affecting the recycling and targeting of AMPA receptors to the synapse (PubMed:16037816). Is required for faithful sorting of L1CAM to axons by facilitating trafficking from somatodendritic early endosome or the recycling endosome (By similarity). In an other hand, induces apoptosis via the activation of CASP3 in response to DNA damage (By similarity).</text>
</comment>
<comment type="subunit">
    <text evidence="2 4 7">Forms a complex with GRIP1, GRIA2 and STX12 through direct interaction with GRIP1; controls the intracellular fate of AMPAR and the endosomal sorting of the GRIA2 subunit toward recycling and membrane targeting. Interacts with STX12 (PubMed:12070131). Interacts with APP; could regulate APP processing (PubMed:21084623). Interacts with FAM171A1 (By similarity).</text>
</comment>
<comment type="subcellular location">
    <subcellularLocation>
        <location evidence="1">Membrane</location>
        <topology evidence="1">Single-pass type II membrane protein</topology>
    </subcellularLocation>
    <subcellularLocation>
        <location evidence="1">Golgi apparatus</location>
        <location evidence="1">trans-Golgi network membrane</location>
    </subcellularLocation>
    <subcellularLocation>
        <location evidence="1">Endosome membrane</location>
    </subcellularLocation>
    <subcellularLocation>
        <location evidence="1">Cell projection</location>
        <location evidence="1">Dendrite</location>
    </subcellularLocation>
    <subcellularLocation>
        <location evidence="1">Early endosome membrane</location>
    </subcellularLocation>
    <subcellularLocation>
        <location evidence="9">Late endosome membrane</location>
    </subcellularLocation>
    <subcellularLocation>
        <location evidence="1">Lysosome lumen</location>
    </subcellularLocation>
    <subcellularLocation>
        <location evidence="1">Recycling endosome membrane</location>
    </subcellularLocation>
    <subcellularLocation>
        <location evidence="1">Cytoplasmic vesicle membrane</location>
    </subcellularLocation>
    <subcellularLocation>
        <location evidence="1">Golgi apparatus</location>
        <location evidence="1">Golgi stack membrane</location>
    </subcellularLocation>
    <subcellularLocation>
        <location evidence="1">Endosome</location>
        <location evidence="1">Multivesicular body membrane</location>
    </subcellularLocation>
    <subcellularLocation>
        <location evidence="2">Endoplasmic reticulum membrane</location>
    </subcellularLocation>
    <text evidence="1 2 4 9">Endocytosed from the cell surface, thus enters into early endosomes, trafficks to late endosomes and degradates in lysosomes (By similarity). Endoplasmic reticulum targeting is essential for apoptosis (By similarity). Found in both stationary and motile endosomes (PubMed:28874679). A previous study supports a type I membrane protein topology (PubMed:12070131).</text>
</comment>
<comment type="tissue specificity">
    <text evidence="8">Pituitary and less in adrenal gland and testis. Expressed in the hippocampus throughout development. At P0, highly and broadly expressed throughout the cortical plate, but is down-regulated overall at P8 and P14, but remains relatively enriched in layer V. At P0 is expressed ubiquitously in the developing cerebellum namely Purkinje neurons as well as granule neurons. However, it becomes restricted to Purkinje cells by P8. This exclusive expression in Purkinje cells is maintained throughout adulthood.</text>
</comment>
<comment type="developmental stage">
    <text evidence="8">At 17.5 dpc, highly expressed in the cortical plate and in the subplate (SP).</text>
</comment>
<comment type="similarity">
    <text evidence="12">Belongs to the NSG family.</text>
</comment>
<organism>
    <name type="scientific">Mus musculus</name>
    <name type="common">Mouse</name>
    <dbReference type="NCBI Taxonomy" id="10090"/>
    <lineage>
        <taxon>Eukaryota</taxon>
        <taxon>Metazoa</taxon>
        <taxon>Chordata</taxon>
        <taxon>Craniata</taxon>
        <taxon>Vertebrata</taxon>
        <taxon>Euteleostomi</taxon>
        <taxon>Mammalia</taxon>
        <taxon>Eutheria</taxon>
        <taxon>Euarchontoglires</taxon>
        <taxon>Glires</taxon>
        <taxon>Rodentia</taxon>
        <taxon>Myomorpha</taxon>
        <taxon>Muroidea</taxon>
        <taxon>Muridae</taxon>
        <taxon>Murinae</taxon>
        <taxon>Mus</taxon>
        <taxon>Mus</taxon>
    </lineage>
</organism>